<name>MSCL_MYCBP</name>
<proteinExistence type="inferred from homology"/>
<reference key="1">
    <citation type="journal article" date="2007" name="Proc. Natl. Acad. Sci. U.S.A.">
        <title>Genome plasticity of BCG and impact on vaccine efficacy.</title>
        <authorList>
            <person name="Brosch R."/>
            <person name="Gordon S.V."/>
            <person name="Garnier T."/>
            <person name="Eiglmeier K."/>
            <person name="Frigui W."/>
            <person name="Valenti P."/>
            <person name="Dos Santos S."/>
            <person name="Duthoy S."/>
            <person name="Lacroix C."/>
            <person name="Garcia-Pelayo C."/>
            <person name="Inwald J.K."/>
            <person name="Golby P."/>
            <person name="Garcia J.N."/>
            <person name="Hewinson R.G."/>
            <person name="Behr M.A."/>
            <person name="Quail M.A."/>
            <person name="Churcher C."/>
            <person name="Barrell B.G."/>
            <person name="Parkhill J."/>
            <person name="Cole S.T."/>
        </authorList>
    </citation>
    <scope>NUCLEOTIDE SEQUENCE [LARGE SCALE GENOMIC DNA]</scope>
    <source>
        <strain>BCG / Pasteur 1173P2</strain>
    </source>
</reference>
<protein>
    <recommendedName>
        <fullName evidence="1">Large-conductance mechanosensitive channel</fullName>
    </recommendedName>
</protein>
<comment type="function">
    <text evidence="1">Channel that opens in response to stretch forces in the membrane lipid bilayer. May participate in the regulation of osmotic pressure changes within the cell.</text>
</comment>
<comment type="subunit">
    <text evidence="1">Homopentamer.</text>
</comment>
<comment type="subcellular location">
    <subcellularLocation>
        <location evidence="1">Cell membrane</location>
        <topology evidence="1">Multi-pass membrane protein</topology>
    </subcellularLocation>
</comment>
<comment type="similarity">
    <text evidence="1">Belongs to the MscL family.</text>
</comment>
<evidence type="ECO:0000255" key="1">
    <source>
        <dbReference type="HAMAP-Rule" id="MF_00115"/>
    </source>
</evidence>
<evidence type="ECO:0000256" key="2">
    <source>
        <dbReference type="SAM" id="MobiDB-lite"/>
    </source>
</evidence>
<organism>
    <name type="scientific">Mycobacterium bovis (strain BCG / Pasteur 1173P2)</name>
    <dbReference type="NCBI Taxonomy" id="410289"/>
    <lineage>
        <taxon>Bacteria</taxon>
        <taxon>Bacillati</taxon>
        <taxon>Actinomycetota</taxon>
        <taxon>Actinomycetes</taxon>
        <taxon>Mycobacteriales</taxon>
        <taxon>Mycobacteriaceae</taxon>
        <taxon>Mycobacterium</taxon>
        <taxon>Mycobacterium tuberculosis complex</taxon>
    </lineage>
</organism>
<gene>
    <name evidence="1" type="primary">mscL</name>
    <name type="ordered locus">BCG_1040c</name>
</gene>
<feature type="chain" id="PRO_1000015399" description="Large-conductance mechanosensitive channel">
    <location>
        <begin position="1"/>
        <end position="151"/>
    </location>
</feature>
<feature type="transmembrane region" description="Helical" evidence="1">
    <location>
        <begin position="12"/>
        <end position="32"/>
    </location>
</feature>
<feature type="transmembrane region" description="Helical" evidence="1">
    <location>
        <begin position="71"/>
        <end position="91"/>
    </location>
</feature>
<feature type="region of interest" description="Disordered" evidence="2">
    <location>
        <begin position="122"/>
        <end position="151"/>
    </location>
</feature>
<dbReference type="EMBL" id="AM408590">
    <property type="protein sequence ID" value="CAL71027.1"/>
    <property type="molecule type" value="Genomic_DNA"/>
</dbReference>
<dbReference type="RefSeq" id="WP_011799144.1">
    <property type="nucleotide sequence ID" value="NC_008769.1"/>
</dbReference>
<dbReference type="SMR" id="A1KHC1"/>
<dbReference type="KEGG" id="mbb:BCG_1040c"/>
<dbReference type="HOGENOM" id="CLU_095787_1_1_11"/>
<dbReference type="Proteomes" id="UP000001472">
    <property type="component" value="Chromosome"/>
</dbReference>
<dbReference type="GO" id="GO:0005886">
    <property type="term" value="C:plasma membrane"/>
    <property type="evidence" value="ECO:0007669"/>
    <property type="project" value="UniProtKB-SubCell"/>
</dbReference>
<dbReference type="GO" id="GO:0008381">
    <property type="term" value="F:mechanosensitive monoatomic ion channel activity"/>
    <property type="evidence" value="ECO:0007669"/>
    <property type="project" value="UniProtKB-UniRule"/>
</dbReference>
<dbReference type="FunFam" id="1.10.1200.120:FF:000006">
    <property type="entry name" value="Large-conductance mechanosensitive channel"/>
    <property type="match status" value="1"/>
</dbReference>
<dbReference type="Gene3D" id="1.20.5.220">
    <property type="match status" value="1"/>
</dbReference>
<dbReference type="Gene3D" id="1.10.1200.120">
    <property type="entry name" value="Large-conductance mechanosensitive channel, MscL, domain 1"/>
    <property type="match status" value="1"/>
</dbReference>
<dbReference type="HAMAP" id="MF_00115">
    <property type="entry name" value="MscL"/>
    <property type="match status" value="1"/>
</dbReference>
<dbReference type="InterPro" id="IPR019823">
    <property type="entry name" value="Mechanosensitive_channel_CS"/>
</dbReference>
<dbReference type="InterPro" id="IPR001185">
    <property type="entry name" value="MS_channel"/>
</dbReference>
<dbReference type="InterPro" id="IPR037673">
    <property type="entry name" value="MSC/AndL"/>
</dbReference>
<dbReference type="InterPro" id="IPR036019">
    <property type="entry name" value="MscL_channel"/>
</dbReference>
<dbReference type="NCBIfam" id="TIGR00220">
    <property type="entry name" value="mscL"/>
    <property type="match status" value="1"/>
</dbReference>
<dbReference type="NCBIfam" id="NF001842">
    <property type="entry name" value="PRK00567.1-3"/>
    <property type="match status" value="1"/>
</dbReference>
<dbReference type="PANTHER" id="PTHR30266:SF2">
    <property type="entry name" value="LARGE-CONDUCTANCE MECHANOSENSITIVE CHANNEL"/>
    <property type="match status" value="1"/>
</dbReference>
<dbReference type="PANTHER" id="PTHR30266">
    <property type="entry name" value="MECHANOSENSITIVE CHANNEL MSCL"/>
    <property type="match status" value="1"/>
</dbReference>
<dbReference type="Pfam" id="PF01741">
    <property type="entry name" value="MscL"/>
    <property type="match status" value="1"/>
</dbReference>
<dbReference type="PRINTS" id="PR01264">
    <property type="entry name" value="MECHCHANNEL"/>
</dbReference>
<dbReference type="SUPFAM" id="SSF81330">
    <property type="entry name" value="Gated mechanosensitive channel"/>
    <property type="match status" value="1"/>
</dbReference>
<dbReference type="PROSITE" id="PS01327">
    <property type="entry name" value="MSCL"/>
    <property type="match status" value="1"/>
</dbReference>
<sequence length="151" mass="15980">MLKGFKEFLARGNIVDLAVAVVIGTAFTALVTKFTDSIITPLINRIGVNAQSDVGILRIGIGGGQTIDLNVLLSAAINFFLIAFAVYFLVVLPYNTLRKKGEVEQPGDTQVVLLTEIRDLLAQTNGDSPGRHGGRGTPSPTDGPLASTESQ</sequence>
<keyword id="KW-1003">Cell membrane</keyword>
<keyword id="KW-0407">Ion channel</keyword>
<keyword id="KW-0406">Ion transport</keyword>
<keyword id="KW-0472">Membrane</keyword>
<keyword id="KW-0812">Transmembrane</keyword>
<keyword id="KW-1133">Transmembrane helix</keyword>
<keyword id="KW-0813">Transport</keyword>
<accession>A1KHC1</accession>